<accession>Q2T292</accession>
<protein>
    <recommendedName>
        <fullName evidence="1">Aspartyl/glutamyl-tRNA(Asn/Gln) amidotransferase subunit B</fullName>
        <shortName evidence="1">Asp/Glu-ADT subunit B</shortName>
        <ecNumber evidence="1">6.3.5.-</ecNumber>
    </recommendedName>
</protein>
<proteinExistence type="inferred from homology"/>
<gene>
    <name evidence="1" type="primary">gatB</name>
    <name type="ordered locus">BTH_I0149</name>
</gene>
<keyword id="KW-0067">ATP-binding</keyword>
<keyword id="KW-0436">Ligase</keyword>
<keyword id="KW-0547">Nucleotide-binding</keyword>
<keyword id="KW-0648">Protein biosynthesis</keyword>
<sequence>MTQWEVVIGLETHAQLSTVSKIFSGASTQFGAEPNTQACPVDLALPGVLPVLNRGAVERAIRFGLAIGATVAPRSIFARKNYFYPDLPKGYQISQYEIPVVQGGQITIQVPANEKAGKQAYSKTVNLTRAHLEEDAGKSLHEDFAGMTGIDLNRAGTPLLEIVTEPEMRSAAEAVAYAKALHGLVVWLGICDGNMQEGSFRCDANVSVRPVGQEKFGTRAEIKNLNSFRFLEDAINYEVRRQIELIEDGGEVVQETRLYDPDKRETRSMRSKEDAHDYRYFPDPDLMPLVIGADWIERVKGEMPELPAAMQQRFVEQYGVSAYDAGVLTSTKAMAAYFEAVVAKAGAANAKIAANWLMGDVSSQLNRDGIDIDACPVSAAQLALVLQRIADGTISNKIAKEIFVAIWDEKAADEGAADRIIDAKGLKQISDTGALEAIIDEVLAANAKSVEEFRAGKEKAFNALVGQAMKATKGKANPQQVNELLKKKLG</sequence>
<dbReference type="EC" id="6.3.5.-" evidence="1"/>
<dbReference type="EMBL" id="CP000086">
    <property type="protein sequence ID" value="ABC36765.1"/>
    <property type="molecule type" value="Genomic_DNA"/>
</dbReference>
<dbReference type="RefSeq" id="WP_009893589.1">
    <property type="nucleotide sequence ID" value="NZ_CP008785.1"/>
</dbReference>
<dbReference type="SMR" id="Q2T292"/>
<dbReference type="GeneID" id="45119921"/>
<dbReference type="KEGG" id="bte:BTH_I0149"/>
<dbReference type="HOGENOM" id="CLU_019240_0_0_4"/>
<dbReference type="Proteomes" id="UP000001930">
    <property type="component" value="Chromosome I"/>
</dbReference>
<dbReference type="GO" id="GO:0050566">
    <property type="term" value="F:asparaginyl-tRNA synthase (glutamine-hydrolyzing) activity"/>
    <property type="evidence" value="ECO:0007669"/>
    <property type="project" value="RHEA"/>
</dbReference>
<dbReference type="GO" id="GO:0005524">
    <property type="term" value="F:ATP binding"/>
    <property type="evidence" value="ECO:0007669"/>
    <property type="project" value="UniProtKB-KW"/>
</dbReference>
<dbReference type="GO" id="GO:0050567">
    <property type="term" value="F:glutaminyl-tRNA synthase (glutamine-hydrolyzing) activity"/>
    <property type="evidence" value="ECO:0007669"/>
    <property type="project" value="UniProtKB-UniRule"/>
</dbReference>
<dbReference type="GO" id="GO:0070681">
    <property type="term" value="P:glutaminyl-tRNAGln biosynthesis via transamidation"/>
    <property type="evidence" value="ECO:0007669"/>
    <property type="project" value="TreeGrafter"/>
</dbReference>
<dbReference type="GO" id="GO:0006412">
    <property type="term" value="P:translation"/>
    <property type="evidence" value="ECO:0007669"/>
    <property type="project" value="UniProtKB-UniRule"/>
</dbReference>
<dbReference type="FunFam" id="1.10.10.410:FF:000001">
    <property type="entry name" value="Aspartyl/glutamyl-tRNA(Asn/Gln) amidotransferase subunit B"/>
    <property type="match status" value="1"/>
</dbReference>
<dbReference type="FunFam" id="1.10.150.380:FF:000001">
    <property type="entry name" value="Aspartyl/glutamyl-tRNA(Asn/Gln) amidotransferase subunit B"/>
    <property type="match status" value="1"/>
</dbReference>
<dbReference type="Gene3D" id="1.10.10.410">
    <property type="match status" value="1"/>
</dbReference>
<dbReference type="Gene3D" id="1.10.150.380">
    <property type="entry name" value="GatB domain, N-terminal subdomain"/>
    <property type="match status" value="1"/>
</dbReference>
<dbReference type="HAMAP" id="MF_00121">
    <property type="entry name" value="GatB"/>
    <property type="match status" value="1"/>
</dbReference>
<dbReference type="InterPro" id="IPR017959">
    <property type="entry name" value="Asn/Gln-tRNA_amidoTrfase_suB/E"/>
</dbReference>
<dbReference type="InterPro" id="IPR006075">
    <property type="entry name" value="Asn/Gln-tRNA_Trfase_suB/E_cat"/>
</dbReference>
<dbReference type="InterPro" id="IPR018027">
    <property type="entry name" value="Asn/Gln_amidotransferase"/>
</dbReference>
<dbReference type="InterPro" id="IPR003789">
    <property type="entry name" value="Asn/Gln_tRNA_amidoTrase-B-like"/>
</dbReference>
<dbReference type="InterPro" id="IPR004413">
    <property type="entry name" value="GatB"/>
</dbReference>
<dbReference type="InterPro" id="IPR042114">
    <property type="entry name" value="GatB_C_1"/>
</dbReference>
<dbReference type="InterPro" id="IPR023168">
    <property type="entry name" value="GatB_Yqey_C_2"/>
</dbReference>
<dbReference type="InterPro" id="IPR017958">
    <property type="entry name" value="Gln-tRNA_amidoTrfase_suB_CS"/>
</dbReference>
<dbReference type="InterPro" id="IPR014746">
    <property type="entry name" value="Gln_synth/guanido_kin_cat_dom"/>
</dbReference>
<dbReference type="NCBIfam" id="TIGR00133">
    <property type="entry name" value="gatB"/>
    <property type="match status" value="1"/>
</dbReference>
<dbReference type="NCBIfam" id="NF004012">
    <property type="entry name" value="PRK05477.1-2"/>
    <property type="match status" value="1"/>
</dbReference>
<dbReference type="NCBIfam" id="NF004014">
    <property type="entry name" value="PRK05477.1-4"/>
    <property type="match status" value="1"/>
</dbReference>
<dbReference type="NCBIfam" id="NF004015">
    <property type="entry name" value="PRK05477.1-5"/>
    <property type="match status" value="1"/>
</dbReference>
<dbReference type="PANTHER" id="PTHR11659">
    <property type="entry name" value="GLUTAMYL-TRNA GLN AMIDOTRANSFERASE SUBUNIT B MITOCHONDRIAL AND PROKARYOTIC PET112-RELATED"/>
    <property type="match status" value="1"/>
</dbReference>
<dbReference type="PANTHER" id="PTHR11659:SF0">
    <property type="entry name" value="GLUTAMYL-TRNA(GLN) AMIDOTRANSFERASE SUBUNIT B, MITOCHONDRIAL"/>
    <property type="match status" value="1"/>
</dbReference>
<dbReference type="Pfam" id="PF02934">
    <property type="entry name" value="GatB_N"/>
    <property type="match status" value="1"/>
</dbReference>
<dbReference type="Pfam" id="PF02637">
    <property type="entry name" value="GatB_Yqey"/>
    <property type="match status" value="1"/>
</dbReference>
<dbReference type="SMART" id="SM00845">
    <property type="entry name" value="GatB_Yqey"/>
    <property type="match status" value="1"/>
</dbReference>
<dbReference type="SUPFAM" id="SSF89095">
    <property type="entry name" value="GatB/YqeY motif"/>
    <property type="match status" value="1"/>
</dbReference>
<dbReference type="SUPFAM" id="SSF55931">
    <property type="entry name" value="Glutamine synthetase/guanido kinase"/>
    <property type="match status" value="1"/>
</dbReference>
<dbReference type="PROSITE" id="PS01234">
    <property type="entry name" value="GATB"/>
    <property type="match status" value="1"/>
</dbReference>
<feature type="chain" id="PRO_0000241206" description="Aspartyl/glutamyl-tRNA(Asn/Gln) amidotransferase subunit B">
    <location>
        <begin position="1"/>
        <end position="490"/>
    </location>
</feature>
<name>GATB_BURTA</name>
<evidence type="ECO:0000255" key="1">
    <source>
        <dbReference type="HAMAP-Rule" id="MF_00121"/>
    </source>
</evidence>
<reference key="1">
    <citation type="journal article" date="2005" name="BMC Genomics">
        <title>Bacterial genome adaptation to niches: divergence of the potential virulence genes in three Burkholderia species of different survival strategies.</title>
        <authorList>
            <person name="Kim H.S."/>
            <person name="Schell M.A."/>
            <person name="Yu Y."/>
            <person name="Ulrich R.L."/>
            <person name="Sarria S.H."/>
            <person name="Nierman W.C."/>
            <person name="DeShazer D."/>
        </authorList>
    </citation>
    <scope>NUCLEOTIDE SEQUENCE [LARGE SCALE GENOMIC DNA]</scope>
    <source>
        <strain>ATCC 700388 / DSM 13276 / CCUG 48851 / CIP 106301 / E264</strain>
    </source>
</reference>
<comment type="function">
    <text evidence="1">Allows the formation of correctly charged Asn-tRNA(Asn) or Gln-tRNA(Gln) through the transamidation of misacylated Asp-tRNA(Asn) or Glu-tRNA(Gln) in organisms which lack either or both of asparaginyl-tRNA or glutaminyl-tRNA synthetases. The reaction takes place in the presence of glutamine and ATP through an activated phospho-Asp-tRNA(Asn) or phospho-Glu-tRNA(Gln).</text>
</comment>
<comment type="catalytic activity">
    <reaction evidence="1">
        <text>L-glutamyl-tRNA(Gln) + L-glutamine + ATP + H2O = L-glutaminyl-tRNA(Gln) + L-glutamate + ADP + phosphate + H(+)</text>
        <dbReference type="Rhea" id="RHEA:17521"/>
        <dbReference type="Rhea" id="RHEA-COMP:9681"/>
        <dbReference type="Rhea" id="RHEA-COMP:9684"/>
        <dbReference type="ChEBI" id="CHEBI:15377"/>
        <dbReference type="ChEBI" id="CHEBI:15378"/>
        <dbReference type="ChEBI" id="CHEBI:29985"/>
        <dbReference type="ChEBI" id="CHEBI:30616"/>
        <dbReference type="ChEBI" id="CHEBI:43474"/>
        <dbReference type="ChEBI" id="CHEBI:58359"/>
        <dbReference type="ChEBI" id="CHEBI:78520"/>
        <dbReference type="ChEBI" id="CHEBI:78521"/>
        <dbReference type="ChEBI" id="CHEBI:456216"/>
    </reaction>
</comment>
<comment type="catalytic activity">
    <reaction evidence="1">
        <text>L-aspartyl-tRNA(Asn) + L-glutamine + ATP + H2O = L-asparaginyl-tRNA(Asn) + L-glutamate + ADP + phosphate + 2 H(+)</text>
        <dbReference type="Rhea" id="RHEA:14513"/>
        <dbReference type="Rhea" id="RHEA-COMP:9674"/>
        <dbReference type="Rhea" id="RHEA-COMP:9677"/>
        <dbReference type="ChEBI" id="CHEBI:15377"/>
        <dbReference type="ChEBI" id="CHEBI:15378"/>
        <dbReference type="ChEBI" id="CHEBI:29985"/>
        <dbReference type="ChEBI" id="CHEBI:30616"/>
        <dbReference type="ChEBI" id="CHEBI:43474"/>
        <dbReference type="ChEBI" id="CHEBI:58359"/>
        <dbReference type="ChEBI" id="CHEBI:78515"/>
        <dbReference type="ChEBI" id="CHEBI:78516"/>
        <dbReference type="ChEBI" id="CHEBI:456216"/>
    </reaction>
</comment>
<comment type="subunit">
    <text evidence="1">Heterotrimer of A, B and C subunits.</text>
</comment>
<comment type="similarity">
    <text evidence="1">Belongs to the GatB/GatE family. GatB subfamily.</text>
</comment>
<organism>
    <name type="scientific">Burkholderia thailandensis (strain ATCC 700388 / DSM 13276 / CCUG 48851 / CIP 106301 / E264)</name>
    <dbReference type="NCBI Taxonomy" id="271848"/>
    <lineage>
        <taxon>Bacteria</taxon>
        <taxon>Pseudomonadati</taxon>
        <taxon>Pseudomonadota</taxon>
        <taxon>Betaproteobacteria</taxon>
        <taxon>Burkholderiales</taxon>
        <taxon>Burkholderiaceae</taxon>
        <taxon>Burkholderia</taxon>
        <taxon>pseudomallei group</taxon>
    </lineage>
</organism>